<feature type="chain" id="PRO_0000066123" description="Uncharacterized 39.9 kDa protein in amylase 3'region">
    <location>
        <begin position="1"/>
        <end position="346"/>
    </location>
</feature>
<feature type="transmembrane region" description="Helical" evidence="1">
    <location>
        <begin position="15"/>
        <end position="35"/>
    </location>
</feature>
<feature type="transmembrane region" description="Helical" evidence="1">
    <location>
        <begin position="55"/>
        <end position="75"/>
    </location>
</feature>
<feature type="transmembrane region" description="Helical" evidence="1">
    <location>
        <begin position="93"/>
        <end position="113"/>
    </location>
</feature>
<feature type="transmembrane region" description="Helical" evidence="1">
    <location>
        <begin position="139"/>
        <end position="159"/>
    </location>
</feature>
<feature type="transmembrane region" description="Helical" evidence="1">
    <location>
        <begin position="182"/>
        <end position="202"/>
    </location>
</feature>
<feature type="transmembrane region" description="Helical" evidence="1">
    <location>
        <begin position="229"/>
        <end position="249"/>
    </location>
</feature>
<feature type="transmembrane region" description="Helical" evidence="1">
    <location>
        <begin position="269"/>
        <end position="289"/>
    </location>
</feature>
<feature type="transmembrane region" description="Helical" evidence="1">
    <location>
        <begin position="295"/>
        <end position="315"/>
    </location>
</feature>
<comment type="function">
    <text evidence="2">Involved in transport.</text>
</comment>
<comment type="subcellular location">
    <subcellularLocation>
        <location evidence="2">Cell membrane</location>
        <topology evidence="2">Multi-pass membrane protein</topology>
    </subcellularLocation>
</comment>
<comment type="similarity">
    <text evidence="2">To E.coli YeiB, B.subtilis YxaH and B.subtilis YrkO.</text>
</comment>
<dbReference type="EMBL" id="Z22520">
    <property type="protein sequence ID" value="CAA80248.1"/>
    <property type="molecule type" value="Genomic_DNA"/>
</dbReference>
<dbReference type="PIR" id="S34732">
    <property type="entry name" value="S34732"/>
</dbReference>
<dbReference type="GO" id="GO:0005886">
    <property type="term" value="C:plasma membrane"/>
    <property type="evidence" value="ECO:0007669"/>
    <property type="project" value="UniProtKB-SubCell"/>
</dbReference>
<dbReference type="InterPro" id="IPR052529">
    <property type="entry name" value="Bact_Transport_Assoc"/>
</dbReference>
<dbReference type="InterPro" id="IPR007349">
    <property type="entry name" value="DUF418"/>
</dbReference>
<dbReference type="PANTHER" id="PTHR30590:SF3">
    <property type="entry name" value="HYPOTHETICAL MEMBRANE SPANNING PROTEIN"/>
    <property type="match status" value="1"/>
</dbReference>
<dbReference type="PANTHER" id="PTHR30590">
    <property type="entry name" value="INNER MEMBRANE PROTEIN"/>
    <property type="match status" value="1"/>
</dbReference>
<dbReference type="Pfam" id="PF04235">
    <property type="entry name" value="DUF418"/>
    <property type="match status" value="1"/>
</dbReference>
<proteinExistence type="predicted"/>
<name>YAMY_BACAD</name>
<protein>
    <recommendedName>
        <fullName>Uncharacterized 39.9 kDa protein in amylase 3'region</fullName>
    </recommendedName>
</protein>
<reference key="1">
    <citation type="submission" date="1993-04" db="EMBL/GenBank/DDBJ databases">
        <title>Molecular genetics analysis of a maltogenic amylase gene of Bacillus acidopullulyticus.</title>
        <authorList>
            <person name="Kelly A.P."/>
            <person name="Diderichsen B."/>
            <person name="Jorgensen S.T."/>
            <person name="McConnell D.J."/>
        </authorList>
    </citation>
    <scope>NUCLEOTIDE SEQUENCE [GENOMIC DNA]</scope>
</reference>
<accession>P32819</accession>
<evidence type="ECO:0000255" key="1"/>
<evidence type="ECO:0000305" key="2"/>
<keyword id="KW-1003">Cell membrane</keyword>
<keyword id="KW-0472">Membrane</keyword>
<keyword id="KW-0812">Transmembrane</keyword>
<keyword id="KW-1133">Transmembrane helix</keyword>
<keyword id="KW-0813">Transport</keyword>
<sequence>MDPIALDERIGTLDYLRGFALLGIILVNILGLLTVKTPALHSVDAVYQRFLYFFVEARFYPIFSFLFGVGFYLFIARANTRGENGAILFLRRILVLFIFGFIHFLFQPGEALTVYASCGLLMLPFYKIKKEVNLFTGCILLLFVSIFAAKIFMPLPLILLGLSAGQYRIFEKLARYKTETAIFTFFMFILSVGGLLLQYCYVPEQPFNNLNGLEKNYQNMDQLKWFLHLGVATGPILSAFYAGFLLLLLQAPIARRLLSPLKSYGRMALTNYISQTALILLAGKLFHLFNRITYLQSLWLCLAIYVIQLIFSAMWLKYCKFGPLEWVWRMMTYNRKFPILLKKEAD</sequence>
<organism>
    <name type="scientific">Bacillus acidopullulyticus</name>
    <dbReference type="NCBI Taxonomy" id="28030"/>
    <lineage>
        <taxon>Bacteria</taxon>
        <taxon>Bacillati</taxon>
        <taxon>Bacillota</taxon>
        <taxon>Bacilli</taxon>
        <taxon>Bacillales</taxon>
        <taxon>Bacillaceae</taxon>
        <taxon>Bacillus</taxon>
    </lineage>
</organism>